<organism>
    <name type="scientific">Mus musculus</name>
    <name type="common">Mouse</name>
    <dbReference type="NCBI Taxonomy" id="10090"/>
    <lineage>
        <taxon>Eukaryota</taxon>
        <taxon>Metazoa</taxon>
        <taxon>Chordata</taxon>
        <taxon>Craniata</taxon>
        <taxon>Vertebrata</taxon>
        <taxon>Euteleostomi</taxon>
        <taxon>Mammalia</taxon>
        <taxon>Eutheria</taxon>
        <taxon>Euarchontoglires</taxon>
        <taxon>Glires</taxon>
        <taxon>Rodentia</taxon>
        <taxon>Myomorpha</taxon>
        <taxon>Muroidea</taxon>
        <taxon>Muridae</taxon>
        <taxon>Murinae</taxon>
        <taxon>Mus</taxon>
        <taxon>Mus</taxon>
    </lineage>
</organism>
<reference key="1">
    <citation type="journal article" date="2005" name="Physiol. Genomics">
        <title>Embryonic lethality in Dear gene-deficient mice: new player in angiogenesis.</title>
        <authorList>
            <person name="Herrera V.L."/>
            <person name="Ponce L.R."/>
            <person name="Bagamasbad P.D."/>
            <person name="VanPelt B.D."/>
            <person name="Didishvili T."/>
            <person name="Ruiz-Opazo N."/>
        </authorList>
    </citation>
    <scope>NUCLEOTIDE SEQUENCE [MRNA]</scope>
    <scope>TISSUE SPECIFICITY</scope>
    <scope>DISRUPTION PHENOTYPE</scope>
    <scope>DEVELOPMENTAL STAGE</scope>
    <scope>FUNCTION</scope>
    <scope>SUBCELLULAR LOCATION</scope>
    <source>
        <strain evidence="4">C57BL/6J</strain>
        <tissue evidence="4">Kidney</tissue>
    </source>
</reference>
<reference key="2">
    <citation type="journal article" date="2009" name="PLoS Biol.">
        <title>Lineage-specific biology revealed by a finished genome assembly of the mouse.</title>
        <authorList>
            <person name="Church D.M."/>
            <person name="Goodstadt L."/>
            <person name="Hillier L.W."/>
            <person name="Zody M.C."/>
            <person name="Goldstein S."/>
            <person name="She X."/>
            <person name="Bult C.J."/>
            <person name="Agarwala R."/>
            <person name="Cherry J.L."/>
            <person name="DiCuccio M."/>
            <person name="Hlavina W."/>
            <person name="Kapustin Y."/>
            <person name="Meric P."/>
            <person name="Maglott D."/>
            <person name="Birtle Z."/>
            <person name="Marques A.C."/>
            <person name="Graves T."/>
            <person name="Zhou S."/>
            <person name="Teague B."/>
            <person name="Potamousis K."/>
            <person name="Churas C."/>
            <person name="Place M."/>
            <person name="Herschleb J."/>
            <person name="Runnheim R."/>
            <person name="Forrest D."/>
            <person name="Amos-Landgraf J."/>
            <person name="Schwartz D.C."/>
            <person name="Cheng Z."/>
            <person name="Lindblad-Toh K."/>
            <person name="Eichler E.E."/>
            <person name="Ponting C.P."/>
        </authorList>
    </citation>
    <scope>NUCLEOTIDE SEQUENCE [LARGE SCALE GENOMIC DNA]</scope>
    <source>
        <strain>C57BL/6J</strain>
    </source>
</reference>
<protein>
    <recommendedName>
        <fullName evidence="1">Dual endothelin-1/VEGF signal peptide receptor</fullName>
        <shortName evidence="1">DEspR protein</shortName>
        <shortName evidence="1">Dual endothelin-1/VEGFsp receptor</shortName>
    </recommendedName>
    <alternativeName>
        <fullName evidence="1">FBXW7 antisense RNA 1 homolog</fullName>
    </alternativeName>
</protein>
<keyword id="KW-1003">Cell membrane</keyword>
<keyword id="KW-0472">Membrane</keyword>
<keyword id="KW-0675">Receptor</keyword>
<keyword id="KW-1185">Reference proteome</keyword>
<keyword id="KW-0812">Transmembrane</keyword>
<keyword id="KW-1133">Transmembrane helix</keyword>
<name>DESPR_MOUSE</name>
<dbReference type="EMBL" id="DQ009865">
    <property type="protein sequence ID" value="AAY56470.1"/>
    <property type="molecule type" value="mRNA"/>
</dbReference>
<dbReference type="EMBL" id="AC124496">
    <property type="status" value="NOT_ANNOTATED_CDS"/>
    <property type="molecule type" value="Genomic_DNA"/>
</dbReference>
<dbReference type="FunCoup" id="Q2QKR2">
    <property type="interactions" value="2"/>
</dbReference>
<dbReference type="AGR" id="MGI:3614654"/>
<dbReference type="MGI" id="MGI:3614654">
    <property type="gene designation" value="Fbxw7as1"/>
</dbReference>
<dbReference type="InParanoid" id="Q2QKR2"/>
<dbReference type="PRO" id="PR:Q2QKR2"/>
<dbReference type="Proteomes" id="UP000000589">
    <property type="component" value="Unplaced"/>
</dbReference>
<dbReference type="GO" id="GO:0016020">
    <property type="term" value="C:membrane"/>
    <property type="evidence" value="ECO:0000314"/>
    <property type="project" value="MGI"/>
</dbReference>
<dbReference type="GO" id="GO:0005886">
    <property type="term" value="C:plasma membrane"/>
    <property type="evidence" value="ECO:0000250"/>
    <property type="project" value="UniProtKB"/>
</dbReference>
<dbReference type="GO" id="GO:0004962">
    <property type="term" value="F:endothelin receptor activity"/>
    <property type="evidence" value="ECO:0000314"/>
    <property type="project" value="MGI"/>
</dbReference>
<dbReference type="GO" id="GO:0038085">
    <property type="term" value="F:vascular endothelial growth factor binding"/>
    <property type="evidence" value="ECO:0000314"/>
    <property type="project" value="MGI"/>
</dbReference>
<dbReference type="GO" id="GO:0005021">
    <property type="term" value="F:vascular endothelial growth factor receptor activity"/>
    <property type="evidence" value="ECO:0000314"/>
    <property type="project" value="MGI"/>
</dbReference>
<dbReference type="GO" id="GO:0001568">
    <property type="term" value="P:blood vessel development"/>
    <property type="evidence" value="ECO:0000315"/>
    <property type="project" value="MGI"/>
</dbReference>
<dbReference type="GO" id="GO:0021766">
    <property type="term" value="P:hippocampus development"/>
    <property type="evidence" value="ECO:0000315"/>
    <property type="project" value="MGI"/>
</dbReference>
<dbReference type="GO" id="GO:0007611">
    <property type="term" value="P:learning or memory"/>
    <property type="evidence" value="ECO:0000315"/>
    <property type="project" value="MGI"/>
</dbReference>
<dbReference type="GO" id="GO:0010506">
    <property type="term" value="P:regulation of autophagy"/>
    <property type="evidence" value="ECO:0000315"/>
    <property type="project" value="MGI"/>
</dbReference>
<evidence type="ECO:0000250" key="1">
    <source>
        <dbReference type="UniProtKB" id="B0L3A2"/>
    </source>
</evidence>
<evidence type="ECO:0000255" key="2"/>
<evidence type="ECO:0000269" key="3">
    <source>
    </source>
</evidence>
<evidence type="ECO:0000303" key="4">
    <source>
    </source>
</evidence>
<evidence type="ECO:0000305" key="5"/>
<evidence type="ECO:0000312" key="6">
    <source>
        <dbReference type="MGI" id="MGI:3614654"/>
    </source>
</evidence>
<proteinExistence type="evidence at transcript level"/>
<feature type="chain" id="PRO_0000454051" description="Dual endothelin-1/VEGF signal peptide receptor">
    <location>
        <begin position="1"/>
        <end position="127"/>
    </location>
</feature>
<feature type="topological domain" description="Extracellular" evidence="1">
    <location>
        <begin position="1"/>
        <end position="65"/>
    </location>
</feature>
<feature type="transmembrane region" description="Helical" evidence="2">
    <location>
        <begin position="66"/>
        <end position="84"/>
    </location>
</feature>
<feature type="topological domain" description="Cytoplasmic" evidence="1">
    <location>
        <begin position="85"/>
        <end position="127"/>
    </location>
</feature>
<gene>
    <name evidence="1" type="primary">Fbxw7-as1</name>
    <name evidence="4" type="synonym">Dear</name>
    <name evidence="6" type="synonym">Dear1</name>
    <name evidence="6" type="synonym">Fbxw7as1</name>
</gene>
<accession>Q2QKR2</accession>
<sequence length="127" mass="14117">MNALYVTTVPKGYSSLSKCNHNEQDTAYRLWLCTHNHWTAPSGMRLQPLTSLGSKEMKSRWNWGSITCIICFTCVGSQLSMSSSKASNFSGPLQLYQRGIGHITNSYKRPQAPAWPCLSSGTMGRSH</sequence>
<comment type="function">
    <text evidence="1 3">Dual receptor for both endothelin-1 and the signal sequence of vascular endothelial growth factor A (PubMed:16293765). Does not act as a receptor for angiotensin-2 (By similarity). Does not bind the VEGFA mature protein (PubMed:16293765). May play a role in angiogenesis with a significant role in cardiovascular and neural development (PubMed:16293765).</text>
</comment>
<comment type="subcellular location">
    <subcellularLocation>
        <location evidence="3">Cell membrane</location>
        <topology evidence="1 2">Single-pass membrane protein</topology>
    </subcellularLocation>
</comment>
<comment type="tissue specificity">
    <text evidence="3">Widely expressed with higher levels in kidney and aorta.</text>
</comment>
<comment type="developmental stage">
    <text evidence="3">At 9.5 dpc, expressed predominantly in the heart, yolk sac mesodermal layer and endothelium, fetal vascular endothelium in the placenta, dorsal aorta, and ependymal layer of the neural tube. Expression that persists at 12.5 dpc, where expression is increased in some hemangioblasts in yolk sac blood islands, as well as more prominent expression in the ependymal layer of the neuroepithelium and in perineural blood vessels.</text>
</comment>
<comment type="disruption phenotype">
    <text evidence="3">Embryonic lethal at 12.5 dpc. Mice exhibit impaired angiogenesis and dysregulated neuroepithelial development.</text>
</comment>
<comment type="caution">
    <text evidence="3 5">Was shown to act as a dual endothelin-1/angiotensin-2 receptor in the rat Dahl salt-sensitive strain. However, in the rat Dahl salt-resistant strain and in other species including human and mouse, functions as a dual endothelin-1/VEGF signal peptide receptor and does not act as an angiotensin-2 receptor (PubMed:16293765).</text>
</comment>